<proteinExistence type="inferred from homology"/>
<dbReference type="EC" id="7.1.1.-" evidence="2"/>
<dbReference type="EMBL" id="CP000570">
    <property type="protein sequence ID" value="ABN82723.1"/>
    <property type="molecule type" value="Genomic_DNA"/>
</dbReference>
<dbReference type="RefSeq" id="WP_004186402.1">
    <property type="nucleotide sequence ID" value="NC_009074.1"/>
</dbReference>
<dbReference type="SMR" id="A3N7L8"/>
<dbReference type="KEGG" id="bpd:BURPS668_1291"/>
<dbReference type="HOGENOM" id="CLU_055737_7_3_4"/>
<dbReference type="GO" id="GO:0005886">
    <property type="term" value="C:plasma membrane"/>
    <property type="evidence" value="ECO:0007669"/>
    <property type="project" value="UniProtKB-SubCell"/>
</dbReference>
<dbReference type="GO" id="GO:0045271">
    <property type="term" value="C:respiratory chain complex I"/>
    <property type="evidence" value="ECO:0007669"/>
    <property type="project" value="TreeGrafter"/>
</dbReference>
<dbReference type="GO" id="GO:0051539">
    <property type="term" value="F:4 iron, 4 sulfur cluster binding"/>
    <property type="evidence" value="ECO:0007669"/>
    <property type="project" value="UniProtKB-KW"/>
</dbReference>
<dbReference type="GO" id="GO:0005506">
    <property type="term" value="F:iron ion binding"/>
    <property type="evidence" value="ECO:0007669"/>
    <property type="project" value="UniProtKB-UniRule"/>
</dbReference>
<dbReference type="GO" id="GO:0008137">
    <property type="term" value="F:NADH dehydrogenase (ubiquinone) activity"/>
    <property type="evidence" value="ECO:0007669"/>
    <property type="project" value="InterPro"/>
</dbReference>
<dbReference type="GO" id="GO:0050136">
    <property type="term" value="F:NADH:ubiquinone reductase (non-electrogenic) activity"/>
    <property type="evidence" value="ECO:0007669"/>
    <property type="project" value="UniProtKB-UniRule"/>
</dbReference>
<dbReference type="GO" id="GO:0048038">
    <property type="term" value="F:quinone binding"/>
    <property type="evidence" value="ECO:0007669"/>
    <property type="project" value="UniProtKB-KW"/>
</dbReference>
<dbReference type="GO" id="GO:0009060">
    <property type="term" value="P:aerobic respiration"/>
    <property type="evidence" value="ECO:0007669"/>
    <property type="project" value="TreeGrafter"/>
</dbReference>
<dbReference type="GO" id="GO:0015990">
    <property type="term" value="P:electron transport coupled proton transport"/>
    <property type="evidence" value="ECO:0007669"/>
    <property type="project" value="TreeGrafter"/>
</dbReference>
<dbReference type="FunFam" id="3.40.50.12280:FF:000001">
    <property type="entry name" value="NADH-quinone oxidoreductase subunit B 2"/>
    <property type="match status" value="1"/>
</dbReference>
<dbReference type="Gene3D" id="3.40.50.12280">
    <property type="match status" value="1"/>
</dbReference>
<dbReference type="HAMAP" id="MF_01356">
    <property type="entry name" value="NDH1_NuoB"/>
    <property type="match status" value="1"/>
</dbReference>
<dbReference type="InterPro" id="IPR006137">
    <property type="entry name" value="NADH_UbQ_OxRdtase-like_20kDa"/>
</dbReference>
<dbReference type="InterPro" id="IPR006138">
    <property type="entry name" value="NADH_UQ_OxRdtase_20Kd_su"/>
</dbReference>
<dbReference type="NCBIfam" id="TIGR01957">
    <property type="entry name" value="nuoB_fam"/>
    <property type="match status" value="1"/>
</dbReference>
<dbReference type="NCBIfam" id="NF005012">
    <property type="entry name" value="PRK06411.1"/>
    <property type="match status" value="1"/>
</dbReference>
<dbReference type="PANTHER" id="PTHR11995">
    <property type="entry name" value="NADH DEHYDROGENASE"/>
    <property type="match status" value="1"/>
</dbReference>
<dbReference type="PANTHER" id="PTHR11995:SF14">
    <property type="entry name" value="NADH DEHYDROGENASE [UBIQUINONE] IRON-SULFUR PROTEIN 7, MITOCHONDRIAL"/>
    <property type="match status" value="1"/>
</dbReference>
<dbReference type="Pfam" id="PF01058">
    <property type="entry name" value="Oxidored_q6"/>
    <property type="match status" value="1"/>
</dbReference>
<dbReference type="SUPFAM" id="SSF56770">
    <property type="entry name" value="HydA/Nqo6-like"/>
    <property type="match status" value="1"/>
</dbReference>
<dbReference type="PROSITE" id="PS01150">
    <property type="entry name" value="COMPLEX1_20K"/>
    <property type="match status" value="1"/>
</dbReference>
<keyword id="KW-0004">4Fe-4S</keyword>
<keyword id="KW-0997">Cell inner membrane</keyword>
<keyword id="KW-1003">Cell membrane</keyword>
<keyword id="KW-0408">Iron</keyword>
<keyword id="KW-0411">Iron-sulfur</keyword>
<keyword id="KW-0472">Membrane</keyword>
<keyword id="KW-0479">Metal-binding</keyword>
<keyword id="KW-0520">NAD</keyword>
<keyword id="KW-0874">Quinone</keyword>
<keyword id="KW-1278">Translocase</keyword>
<keyword id="KW-0813">Transport</keyword>
<keyword id="KW-0830">Ubiquinone</keyword>
<gene>
    <name evidence="2" type="primary">nuoB1</name>
    <name type="ordered locus">BURPS668_1291</name>
</gene>
<evidence type="ECO:0000250" key="1"/>
<evidence type="ECO:0000255" key="2">
    <source>
        <dbReference type="HAMAP-Rule" id="MF_01356"/>
    </source>
</evidence>
<organism>
    <name type="scientific">Burkholderia pseudomallei (strain 668)</name>
    <dbReference type="NCBI Taxonomy" id="320373"/>
    <lineage>
        <taxon>Bacteria</taxon>
        <taxon>Pseudomonadati</taxon>
        <taxon>Pseudomonadota</taxon>
        <taxon>Betaproteobacteria</taxon>
        <taxon>Burkholderiales</taxon>
        <taxon>Burkholderiaceae</taxon>
        <taxon>Burkholderia</taxon>
        <taxon>pseudomallei group</taxon>
    </lineage>
</organism>
<reference key="1">
    <citation type="journal article" date="2010" name="Genome Biol. Evol.">
        <title>Continuing evolution of Burkholderia mallei through genome reduction and large-scale rearrangements.</title>
        <authorList>
            <person name="Losada L."/>
            <person name="Ronning C.M."/>
            <person name="DeShazer D."/>
            <person name="Woods D."/>
            <person name="Fedorova N."/>
            <person name="Kim H.S."/>
            <person name="Shabalina S.A."/>
            <person name="Pearson T.R."/>
            <person name="Brinkac L."/>
            <person name="Tan P."/>
            <person name="Nandi T."/>
            <person name="Crabtree J."/>
            <person name="Badger J."/>
            <person name="Beckstrom-Sternberg S."/>
            <person name="Saqib M."/>
            <person name="Schutzer S.E."/>
            <person name="Keim P."/>
            <person name="Nierman W.C."/>
        </authorList>
    </citation>
    <scope>NUCLEOTIDE SEQUENCE [LARGE SCALE GENOMIC DNA]</scope>
    <source>
        <strain>668</strain>
    </source>
</reference>
<comment type="function">
    <text evidence="1">NDH-1 shuttles electrons from NADH, via FMN and iron-sulfur (Fe-S) centers, to quinones in the respiratory chain. Couples the redox reaction to proton translocation (for every two electrons transferred, four hydrogen ions are translocated across the cytoplasmic membrane), and thus conserves the redox energy in a proton gradient (By similarity).</text>
</comment>
<comment type="catalytic activity">
    <reaction evidence="2">
        <text>a quinone + NADH + 5 H(+)(in) = a quinol + NAD(+) + 4 H(+)(out)</text>
        <dbReference type="Rhea" id="RHEA:57888"/>
        <dbReference type="ChEBI" id="CHEBI:15378"/>
        <dbReference type="ChEBI" id="CHEBI:24646"/>
        <dbReference type="ChEBI" id="CHEBI:57540"/>
        <dbReference type="ChEBI" id="CHEBI:57945"/>
        <dbReference type="ChEBI" id="CHEBI:132124"/>
    </reaction>
</comment>
<comment type="cofactor">
    <cofactor evidence="2">
        <name>[4Fe-4S] cluster</name>
        <dbReference type="ChEBI" id="CHEBI:49883"/>
    </cofactor>
    <text evidence="2">Binds 1 [4Fe-4S] cluster.</text>
</comment>
<comment type="subunit">
    <text evidence="2">NDH-1 is composed of 14 different subunits. Subunits NuoB, C, D, E, F, and G constitute the peripheral sector of the complex.</text>
</comment>
<comment type="subcellular location">
    <subcellularLocation>
        <location evidence="2">Cell inner membrane</location>
        <topology evidence="2">Peripheral membrane protein</topology>
        <orientation evidence="2">Cytoplasmic side</orientation>
    </subcellularLocation>
</comment>
<comment type="similarity">
    <text evidence="2">Belongs to the complex I 20 kDa subunit family.</text>
</comment>
<sequence length="159" mass="17533">MSIEGVLKEGFVTTTADKLINWTRTGSLWPMTFGLACCAVEMMHAGAARYDLDRFGVVFRPSPRQSDVMIVAGTLCNKMAPALRRVYDQMAEPRWVISMGSCANGGGYYHYSYSVVRGCDRIVPVDVYVPGCPPTAEALVYGVIQLQAKIRRTSTIARQ</sequence>
<protein>
    <recommendedName>
        <fullName evidence="2">NADH-quinone oxidoreductase subunit B 1</fullName>
        <ecNumber evidence="2">7.1.1.-</ecNumber>
    </recommendedName>
    <alternativeName>
        <fullName evidence="2">NADH dehydrogenase I subunit B 1</fullName>
    </alternativeName>
    <alternativeName>
        <fullName evidence="2">NDH-1 subunit B 1</fullName>
    </alternativeName>
</protein>
<feature type="chain" id="PRO_0000358386" description="NADH-quinone oxidoreductase subunit B 1">
    <location>
        <begin position="1"/>
        <end position="159"/>
    </location>
</feature>
<feature type="binding site" evidence="2">
    <location>
        <position position="37"/>
    </location>
    <ligand>
        <name>[4Fe-4S] cluster</name>
        <dbReference type="ChEBI" id="CHEBI:49883"/>
    </ligand>
</feature>
<feature type="binding site" evidence="2">
    <location>
        <position position="38"/>
    </location>
    <ligand>
        <name>[4Fe-4S] cluster</name>
        <dbReference type="ChEBI" id="CHEBI:49883"/>
    </ligand>
</feature>
<feature type="binding site" evidence="2">
    <location>
        <position position="102"/>
    </location>
    <ligand>
        <name>[4Fe-4S] cluster</name>
        <dbReference type="ChEBI" id="CHEBI:49883"/>
    </ligand>
</feature>
<feature type="binding site" evidence="2">
    <location>
        <position position="132"/>
    </location>
    <ligand>
        <name>[4Fe-4S] cluster</name>
        <dbReference type="ChEBI" id="CHEBI:49883"/>
    </ligand>
</feature>
<name>NUOB1_BURP6</name>
<accession>A3N7L8</accession>